<name>YEKJ_SCHPO</name>
<keyword id="KW-0479">Metal-binding</keyword>
<keyword id="KW-1185">Reference proteome</keyword>
<keyword id="KW-0862">Zinc</keyword>
<keyword id="KW-0863">Zinc-finger</keyword>
<protein>
    <recommendedName>
        <fullName>Uncharacterized zinc-finger protein C4F10.19c</fullName>
    </recommendedName>
</protein>
<reference key="1">
    <citation type="journal article" date="2002" name="Nature">
        <title>The genome sequence of Schizosaccharomyces pombe.</title>
        <authorList>
            <person name="Wood V."/>
            <person name="Gwilliam R."/>
            <person name="Rajandream M.A."/>
            <person name="Lyne M.H."/>
            <person name="Lyne R."/>
            <person name="Stewart A."/>
            <person name="Sgouros J.G."/>
            <person name="Peat N."/>
            <person name="Hayles J."/>
            <person name="Baker S.G."/>
            <person name="Basham D."/>
            <person name="Bowman S."/>
            <person name="Brooks K."/>
            <person name="Brown D."/>
            <person name="Brown S."/>
            <person name="Chillingworth T."/>
            <person name="Churcher C.M."/>
            <person name="Collins M."/>
            <person name="Connor R."/>
            <person name="Cronin A."/>
            <person name="Davis P."/>
            <person name="Feltwell T."/>
            <person name="Fraser A."/>
            <person name="Gentles S."/>
            <person name="Goble A."/>
            <person name="Hamlin N."/>
            <person name="Harris D.E."/>
            <person name="Hidalgo J."/>
            <person name="Hodgson G."/>
            <person name="Holroyd S."/>
            <person name="Hornsby T."/>
            <person name="Howarth S."/>
            <person name="Huckle E.J."/>
            <person name="Hunt S."/>
            <person name="Jagels K."/>
            <person name="James K.D."/>
            <person name="Jones L."/>
            <person name="Jones M."/>
            <person name="Leather S."/>
            <person name="McDonald S."/>
            <person name="McLean J."/>
            <person name="Mooney P."/>
            <person name="Moule S."/>
            <person name="Mungall K.L."/>
            <person name="Murphy L.D."/>
            <person name="Niblett D."/>
            <person name="Odell C."/>
            <person name="Oliver K."/>
            <person name="O'Neil S."/>
            <person name="Pearson D."/>
            <person name="Quail M.A."/>
            <person name="Rabbinowitsch E."/>
            <person name="Rutherford K.M."/>
            <person name="Rutter S."/>
            <person name="Saunders D."/>
            <person name="Seeger K."/>
            <person name="Sharp S."/>
            <person name="Skelton J."/>
            <person name="Simmonds M.N."/>
            <person name="Squares R."/>
            <person name="Squares S."/>
            <person name="Stevens K."/>
            <person name="Taylor K."/>
            <person name="Taylor R.G."/>
            <person name="Tivey A."/>
            <person name="Walsh S.V."/>
            <person name="Warren T."/>
            <person name="Whitehead S."/>
            <person name="Woodward J.R."/>
            <person name="Volckaert G."/>
            <person name="Aert R."/>
            <person name="Robben J."/>
            <person name="Grymonprez B."/>
            <person name="Weltjens I."/>
            <person name="Vanstreels E."/>
            <person name="Rieger M."/>
            <person name="Schaefer M."/>
            <person name="Mueller-Auer S."/>
            <person name="Gabel C."/>
            <person name="Fuchs M."/>
            <person name="Duesterhoeft A."/>
            <person name="Fritzc C."/>
            <person name="Holzer E."/>
            <person name="Moestl D."/>
            <person name="Hilbert H."/>
            <person name="Borzym K."/>
            <person name="Langer I."/>
            <person name="Beck A."/>
            <person name="Lehrach H."/>
            <person name="Reinhardt R."/>
            <person name="Pohl T.M."/>
            <person name="Eger P."/>
            <person name="Zimmermann W."/>
            <person name="Wedler H."/>
            <person name="Wambutt R."/>
            <person name="Purnelle B."/>
            <person name="Goffeau A."/>
            <person name="Cadieu E."/>
            <person name="Dreano S."/>
            <person name="Gloux S."/>
            <person name="Lelaure V."/>
            <person name="Mottier S."/>
            <person name="Galibert F."/>
            <person name="Aves S.J."/>
            <person name="Xiang Z."/>
            <person name="Hunt C."/>
            <person name="Moore K."/>
            <person name="Hurst S.M."/>
            <person name="Lucas M."/>
            <person name="Rochet M."/>
            <person name="Gaillardin C."/>
            <person name="Tallada V.A."/>
            <person name="Garzon A."/>
            <person name="Thode G."/>
            <person name="Daga R.R."/>
            <person name="Cruzado L."/>
            <person name="Jimenez J."/>
            <person name="Sanchez M."/>
            <person name="del Rey F."/>
            <person name="Benito J."/>
            <person name="Dominguez A."/>
            <person name="Revuelta J.L."/>
            <person name="Moreno S."/>
            <person name="Armstrong J."/>
            <person name="Forsburg S.L."/>
            <person name="Cerutti L."/>
            <person name="Lowe T."/>
            <person name="McCombie W.R."/>
            <person name="Paulsen I."/>
            <person name="Potashkin J."/>
            <person name="Shpakovski G.V."/>
            <person name="Ussery D."/>
            <person name="Barrell B.G."/>
            <person name="Nurse P."/>
        </authorList>
    </citation>
    <scope>NUCLEOTIDE SEQUENCE [LARGE SCALE GENOMIC DNA]</scope>
    <source>
        <strain>972 / ATCC 24843</strain>
    </source>
</reference>
<organism>
    <name type="scientific">Schizosaccharomyces pombe (strain 972 / ATCC 24843)</name>
    <name type="common">Fission yeast</name>
    <dbReference type="NCBI Taxonomy" id="284812"/>
    <lineage>
        <taxon>Eukaryota</taxon>
        <taxon>Fungi</taxon>
        <taxon>Dikarya</taxon>
        <taxon>Ascomycota</taxon>
        <taxon>Taphrinomycotina</taxon>
        <taxon>Schizosaccharomycetes</taxon>
        <taxon>Schizosaccharomycetales</taxon>
        <taxon>Schizosaccharomycetaceae</taxon>
        <taxon>Schizosaccharomyces</taxon>
    </lineage>
</organism>
<accession>O36031</accession>
<proteinExistence type="predicted"/>
<evidence type="ECO:0000255" key="1">
    <source>
        <dbReference type="PROSITE-ProRule" id="PRU00453"/>
    </source>
</evidence>
<gene>
    <name type="ORF">SPAC4F10.19c</name>
</gene>
<feature type="chain" id="PRO_0000173560" description="Uncharacterized zinc-finger protein C4F10.19c">
    <location>
        <begin position="1"/>
        <end position="154"/>
    </location>
</feature>
<feature type="zinc finger region" description="HIT-type" evidence="1">
    <location>
        <begin position="4"/>
        <end position="36"/>
    </location>
</feature>
<feature type="binding site" evidence="1">
    <location>
        <position position="4"/>
    </location>
    <ligand>
        <name>Zn(2+)</name>
        <dbReference type="ChEBI" id="CHEBI:29105"/>
        <label>1</label>
    </ligand>
</feature>
<feature type="binding site" evidence="1">
    <location>
        <position position="7"/>
    </location>
    <ligand>
        <name>Zn(2+)</name>
        <dbReference type="ChEBI" id="CHEBI:29105"/>
        <label>1</label>
    </ligand>
</feature>
<feature type="binding site" evidence="1">
    <location>
        <position position="16"/>
    </location>
    <ligand>
        <name>Zn(2+)</name>
        <dbReference type="ChEBI" id="CHEBI:29105"/>
        <label>2</label>
    </ligand>
</feature>
<feature type="binding site" evidence="1">
    <location>
        <position position="19"/>
    </location>
    <ligand>
        <name>Zn(2+)</name>
        <dbReference type="ChEBI" id="CHEBI:29105"/>
        <label>2</label>
    </ligand>
</feature>
<feature type="binding site" evidence="1">
    <location>
        <position position="24"/>
    </location>
    <ligand>
        <name>Zn(2+)</name>
        <dbReference type="ChEBI" id="CHEBI:29105"/>
        <label>1</label>
    </ligand>
</feature>
<feature type="binding site" evidence="1">
    <location>
        <position position="28"/>
    </location>
    <ligand>
        <name>Zn(2+)</name>
        <dbReference type="ChEBI" id="CHEBI:29105"/>
        <label>1</label>
    </ligand>
</feature>
<feature type="binding site" evidence="1">
    <location>
        <position position="32"/>
    </location>
    <ligand>
        <name>Zn(2+)</name>
        <dbReference type="ChEBI" id="CHEBI:29105"/>
        <label>2</label>
    </ligand>
</feature>
<feature type="binding site" evidence="1">
    <location>
        <position position="36"/>
    </location>
    <ligand>
        <name>Zn(2+)</name>
        <dbReference type="ChEBI" id="CHEBI:29105"/>
        <label>2</label>
    </ligand>
</feature>
<sequence length="154" mass="17427">MTTCSICNESEIKYKCPKCSFPYCSLPCWKIHQSQCETVNDNNTTTFKGVKEPLNPPEPSPNVIYVNGRIPSLAEEALPSESLLESIVEDPSIKNLIESNAELLHIMKELVNLDREEEGSVPLKTLDAIQQQRLHNPSFEKLASMILEKYYAQK</sequence>
<dbReference type="EMBL" id="CU329670">
    <property type="protein sequence ID" value="CAB11725.1"/>
    <property type="molecule type" value="Genomic_DNA"/>
</dbReference>
<dbReference type="PIR" id="T38823">
    <property type="entry name" value="T38823"/>
</dbReference>
<dbReference type="SMR" id="O36031"/>
<dbReference type="BioGRID" id="280027">
    <property type="interactions" value="4"/>
</dbReference>
<dbReference type="FunCoup" id="O36031">
    <property type="interactions" value="168"/>
</dbReference>
<dbReference type="STRING" id="284812.O36031"/>
<dbReference type="iPTMnet" id="O36031"/>
<dbReference type="PaxDb" id="4896-SPAC4F10.19c.1"/>
<dbReference type="EnsemblFungi" id="SPAC4F10.19c.1">
    <property type="protein sequence ID" value="SPAC4F10.19c.1:pep"/>
    <property type="gene ID" value="SPAC4F10.19c"/>
</dbReference>
<dbReference type="KEGG" id="spo:2543613"/>
<dbReference type="PomBase" id="SPAC4F10.19c"/>
<dbReference type="VEuPathDB" id="FungiDB:SPAC4F10.19c"/>
<dbReference type="eggNOG" id="KOG2857">
    <property type="taxonomic scope" value="Eukaryota"/>
</dbReference>
<dbReference type="HOGENOM" id="CLU_1723403_0_0_1"/>
<dbReference type="InParanoid" id="O36031"/>
<dbReference type="OMA" id="GPAKYKC"/>
<dbReference type="PhylomeDB" id="O36031"/>
<dbReference type="PRO" id="PR:O36031"/>
<dbReference type="Proteomes" id="UP000002485">
    <property type="component" value="Chromosome I"/>
</dbReference>
<dbReference type="GO" id="GO:0005829">
    <property type="term" value="C:cytosol"/>
    <property type="evidence" value="ECO:0007005"/>
    <property type="project" value="PomBase"/>
</dbReference>
<dbReference type="GO" id="GO:0005634">
    <property type="term" value="C:nucleus"/>
    <property type="evidence" value="ECO:0007005"/>
    <property type="project" value="PomBase"/>
</dbReference>
<dbReference type="GO" id="GO:0070761">
    <property type="term" value="C:pre-snoRNP complex"/>
    <property type="evidence" value="ECO:0000318"/>
    <property type="project" value="GO_Central"/>
</dbReference>
<dbReference type="GO" id="GO:0008270">
    <property type="term" value="F:zinc ion binding"/>
    <property type="evidence" value="ECO:0007669"/>
    <property type="project" value="UniProtKB-KW"/>
</dbReference>
<dbReference type="GO" id="GO:0000492">
    <property type="term" value="P:box C/D snoRNP assembly"/>
    <property type="evidence" value="ECO:0000318"/>
    <property type="project" value="GO_Central"/>
</dbReference>
<dbReference type="GO" id="GO:0000463">
    <property type="term" value="P:maturation of LSU-rRNA from tricistronic rRNA transcript (SSU-rRNA, 5.8S rRNA, LSU-rRNA)"/>
    <property type="evidence" value="ECO:0000318"/>
    <property type="project" value="GO_Central"/>
</dbReference>
<dbReference type="GO" id="GO:0048254">
    <property type="term" value="P:snoRNA localization"/>
    <property type="evidence" value="ECO:0000318"/>
    <property type="project" value="GO_Central"/>
</dbReference>
<dbReference type="CDD" id="cd23024">
    <property type="entry name" value="zf-HIT_ZNHIT2-3"/>
    <property type="match status" value="1"/>
</dbReference>
<dbReference type="FunFam" id="3.30.60.190:FF:000009">
    <property type="entry name" value="Uncharacterized zinc-finger protein C4F10.19c"/>
    <property type="match status" value="1"/>
</dbReference>
<dbReference type="Gene3D" id="3.30.60.190">
    <property type="match status" value="1"/>
</dbReference>
<dbReference type="InterPro" id="IPR051639">
    <property type="entry name" value="BCD1"/>
</dbReference>
<dbReference type="InterPro" id="IPR007529">
    <property type="entry name" value="Znf_HIT"/>
</dbReference>
<dbReference type="PANTHER" id="PTHR13483">
    <property type="entry name" value="BOX C_D SNORNA PROTEIN 1-RELATED"/>
    <property type="match status" value="1"/>
</dbReference>
<dbReference type="PANTHER" id="PTHR13483:SF11">
    <property type="entry name" value="ZINC FINGER HIT DOMAIN-CONTAINING PROTEIN 3"/>
    <property type="match status" value="1"/>
</dbReference>
<dbReference type="Pfam" id="PF04438">
    <property type="entry name" value="zf-HIT"/>
    <property type="match status" value="1"/>
</dbReference>
<dbReference type="SUPFAM" id="SSF144232">
    <property type="entry name" value="HIT/MYND zinc finger-like"/>
    <property type="match status" value="1"/>
</dbReference>
<dbReference type="PROSITE" id="PS51083">
    <property type="entry name" value="ZF_HIT"/>
    <property type="match status" value="1"/>
</dbReference>